<comment type="function">
    <text evidence="1">Catalyzes the transfer of endogenously produced octanoic acid from octanoyl-acyl-carrier-protein onto the lipoyl domains of lipoate-dependent enzymes. Lipoyl-ACP can also act as a substrate although octanoyl-ACP is likely to be the physiological substrate.</text>
</comment>
<comment type="catalytic activity">
    <reaction evidence="1">
        <text>octanoyl-[ACP] + L-lysyl-[protein] = N(6)-octanoyl-L-lysyl-[protein] + holo-[ACP] + H(+)</text>
        <dbReference type="Rhea" id="RHEA:17665"/>
        <dbReference type="Rhea" id="RHEA-COMP:9636"/>
        <dbReference type="Rhea" id="RHEA-COMP:9685"/>
        <dbReference type="Rhea" id="RHEA-COMP:9752"/>
        <dbReference type="Rhea" id="RHEA-COMP:9928"/>
        <dbReference type="ChEBI" id="CHEBI:15378"/>
        <dbReference type="ChEBI" id="CHEBI:29969"/>
        <dbReference type="ChEBI" id="CHEBI:64479"/>
        <dbReference type="ChEBI" id="CHEBI:78463"/>
        <dbReference type="ChEBI" id="CHEBI:78809"/>
        <dbReference type="EC" id="2.3.1.181"/>
    </reaction>
</comment>
<comment type="pathway">
    <text evidence="1">Protein modification; protein lipoylation via endogenous pathway; protein N(6)-(lipoyl)lysine from octanoyl-[acyl-carrier-protein]: step 1/2.</text>
</comment>
<comment type="subcellular location">
    <subcellularLocation>
        <location evidence="1">Cytoplasm</location>
    </subcellularLocation>
</comment>
<comment type="miscellaneous">
    <text evidence="1">In the reaction, the free carboxyl group of octanoic acid is attached via an amide linkage to the epsilon-amino group of a specific lysine residue of lipoyl domains of lipoate-dependent enzymes.</text>
</comment>
<comment type="similarity">
    <text evidence="1">Belongs to the LipB family.</text>
</comment>
<reference key="1">
    <citation type="submission" date="2006-06" db="EMBL/GenBank/DDBJ databases">
        <title>Complete sequence of chromosome of Mesorhizobium sp. BNC1.</title>
        <authorList>
            <consortium name="US DOE Joint Genome Institute"/>
            <person name="Copeland A."/>
            <person name="Lucas S."/>
            <person name="Lapidus A."/>
            <person name="Barry K."/>
            <person name="Detter J.C."/>
            <person name="Glavina del Rio T."/>
            <person name="Hammon N."/>
            <person name="Israni S."/>
            <person name="Dalin E."/>
            <person name="Tice H."/>
            <person name="Pitluck S."/>
            <person name="Chertkov O."/>
            <person name="Brettin T."/>
            <person name="Bruce D."/>
            <person name="Han C."/>
            <person name="Tapia R."/>
            <person name="Gilna P."/>
            <person name="Schmutz J."/>
            <person name="Larimer F."/>
            <person name="Land M."/>
            <person name="Hauser L."/>
            <person name="Kyrpides N."/>
            <person name="Mikhailova N."/>
            <person name="Richardson P."/>
        </authorList>
    </citation>
    <scope>NUCLEOTIDE SEQUENCE [LARGE SCALE GENOMIC DNA]</scope>
    <source>
        <strain>BNC1</strain>
    </source>
</reference>
<feature type="chain" id="PRO_0000321645" description="Octanoyltransferase">
    <location>
        <begin position="1"/>
        <end position="246"/>
    </location>
</feature>
<feature type="domain" description="BPL/LPL catalytic" evidence="2">
    <location>
        <begin position="46"/>
        <end position="234"/>
    </location>
</feature>
<feature type="active site" description="Acyl-thioester intermediate" evidence="1">
    <location>
        <position position="196"/>
    </location>
</feature>
<feature type="binding site" evidence="1">
    <location>
        <begin position="85"/>
        <end position="92"/>
    </location>
    <ligand>
        <name>substrate</name>
    </ligand>
</feature>
<feature type="binding site" evidence="1">
    <location>
        <begin position="165"/>
        <end position="167"/>
    </location>
    <ligand>
        <name>substrate</name>
    </ligand>
</feature>
<feature type="binding site" evidence="1">
    <location>
        <begin position="178"/>
        <end position="180"/>
    </location>
    <ligand>
        <name>substrate</name>
    </ligand>
</feature>
<feature type="site" description="Lowers pKa of active site Cys" evidence="1">
    <location>
        <position position="162"/>
    </location>
</feature>
<accession>Q11JI3</accession>
<keyword id="KW-0012">Acyltransferase</keyword>
<keyword id="KW-0963">Cytoplasm</keyword>
<keyword id="KW-0808">Transferase</keyword>
<sequence length="246" mass="27174">MSQTSQTRFIPHSPSPPVEWRIEPGLTPYEKALAFMEQRADAIRAGTAGEMVWLVEHPPLYTAGTSASPGDLLDPNRLPVYQTGRGGEYTYHGPGQRVAYVMLDLKRRREDVRAFVTALEDWIIASLARFNIRGERRQGRVGVWVARPEKSPLPDGTIMEDKIAAIGIRLRRWVSFHGIAVNVEPELAHFSGIVPCGISGFGVTSLVDLGLPVTMADFDVALKEAFEEVFGAAEPLFETDSLKRSA</sequence>
<protein>
    <recommendedName>
        <fullName evidence="1">Octanoyltransferase</fullName>
        <ecNumber evidence="1">2.3.1.181</ecNumber>
    </recommendedName>
    <alternativeName>
        <fullName evidence="1">Lipoate-protein ligase B</fullName>
    </alternativeName>
    <alternativeName>
        <fullName evidence="1">Lipoyl/octanoyl transferase</fullName>
    </alternativeName>
    <alternativeName>
        <fullName evidence="1">Octanoyl-[acyl-carrier-protein]-protein N-octanoyltransferase</fullName>
    </alternativeName>
</protein>
<proteinExistence type="inferred from homology"/>
<evidence type="ECO:0000255" key="1">
    <source>
        <dbReference type="HAMAP-Rule" id="MF_00013"/>
    </source>
</evidence>
<evidence type="ECO:0000255" key="2">
    <source>
        <dbReference type="PROSITE-ProRule" id="PRU01067"/>
    </source>
</evidence>
<dbReference type="EC" id="2.3.1.181" evidence="1"/>
<dbReference type="EMBL" id="CP000390">
    <property type="protein sequence ID" value="ABG62442.1"/>
    <property type="molecule type" value="Genomic_DNA"/>
</dbReference>
<dbReference type="SMR" id="Q11JI3"/>
<dbReference type="STRING" id="266779.Meso_1045"/>
<dbReference type="KEGG" id="mes:Meso_1045"/>
<dbReference type="eggNOG" id="COG0321">
    <property type="taxonomic scope" value="Bacteria"/>
</dbReference>
<dbReference type="HOGENOM" id="CLU_035168_3_0_5"/>
<dbReference type="OrthoDB" id="9787061at2"/>
<dbReference type="UniPathway" id="UPA00538">
    <property type="reaction ID" value="UER00592"/>
</dbReference>
<dbReference type="GO" id="GO:0005737">
    <property type="term" value="C:cytoplasm"/>
    <property type="evidence" value="ECO:0007669"/>
    <property type="project" value="UniProtKB-SubCell"/>
</dbReference>
<dbReference type="GO" id="GO:0033819">
    <property type="term" value="F:lipoyl(octanoyl) transferase activity"/>
    <property type="evidence" value="ECO:0007669"/>
    <property type="project" value="UniProtKB-EC"/>
</dbReference>
<dbReference type="GO" id="GO:0036211">
    <property type="term" value="P:protein modification process"/>
    <property type="evidence" value="ECO:0007669"/>
    <property type="project" value="InterPro"/>
</dbReference>
<dbReference type="CDD" id="cd16444">
    <property type="entry name" value="LipB"/>
    <property type="match status" value="1"/>
</dbReference>
<dbReference type="Gene3D" id="3.30.930.10">
    <property type="entry name" value="Bira Bifunctional Protein, Domain 2"/>
    <property type="match status" value="1"/>
</dbReference>
<dbReference type="HAMAP" id="MF_00013">
    <property type="entry name" value="LipB"/>
    <property type="match status" value="1"/>
</dbReference>
<dbReference type="InterPro" id="IPR045864">
    <property type="entry name" value="aa-tRNA-synth_II/BPL/LPL"/>
</dbReference>
<dbReference type="InterPro" id="IPR004143">
    <property type="entry name" value="BPL_LPL_catalytic"/>
</dbReference>
<dbReference type="InterPro" id="IPR000544">
    <property type="entry name" value="Octanoyltransferase"/>
</dbReference>
<dbReference type="InterPro" id="IPR020605">
    <property type="entry name" value="Octanoyltransferase_CS"/>
</dbReference>
<dbReference type="NCBIfam" id="TIGR00214">
    <property type="entry name" value="lipB"/>
    <property type="match status" value="1"/>
</dbReference>
<dbReference type="NCBIfam" id="NF010921">
    <property type="entry name" value="PRK14341.1"/>
    <property type="match status" value="1"/>
</dbReference>
<dbReference type="NCBIfam" id="NF010925">
    <property type="entry name" value="PRK14345.1"/>
    <property type="match status" value="1"/>
</dbReference>
<dbReference type="PANTHER" id="PTHR10993:SF7">
    <property type="entry name" value="LIPOYLTRANSFERASE 2, MITOCHONDRIAL-RELATED"/>
    <property type="match status" value="1"/>
</dbReference>
<dbReference type="PANTHER" id="PTHR10993">
    <property type="entry name" value="OCTANOYLTRANSFERASE"/>
    <property type="match status" value="1"/>
</dbReference>
<dbReference type="Pfam" id="PF21948">
    <property type="entry name" value="LplA-B_cat"/>
    <property type="match status" value="1"/>
</dbReference>
<dbReference type="PIRSF" id="PIRSF016262">
    <property type="entry name" value="LPLase"/>
    <property type="match status" value="1"/>
</dbReference>
<dbReference type="SUPFAM" id="SSF55681">
    <property type="entry name" value="Class II aaRS and biotin synthetases"/>
    <property type="match status" value="1"/>
</dbReference>
<dbReference type="PROSITE" id="PS51733">
    <property type="entry name" value="BPL_LPL_CATALYTIC"/>
    <property type="match status" value="1"/>
</dbReference>
<dbReference type="PROSITE" id="PS01313">
    <property type="entry name" value="LIPB"/>
    <property type="match status" value="1"/>
</dbReference>
<gene>
    <name evidence="1" type="primary">lipB</name>
    <name type="ordered locus">Meso_1045</name>
</gene>
<name>LIPB_CHESB</name>
<organism>
    <name type="scientific">Chelativorans sp. (strain BNC1)</name>
    <dbReference type="NCBI Taxonomy" id="266779"/>
    <lineage>
        <taxon>Bacteria</taxon>
        <taxon>Pseudomonadati</taxon>
        <taxon>Pseudomonadota</taxon>
        <taxon>Alphaproteobacteria</taxon>
        <taxon>Hyphomicrobiales</taxon>
        <taxon>Phyllobacteriaceae</taxon>
        <taxon>Chelativorans</taxon>
    </lineage>
</organism>